<name>RL18E_SULAC</name>
<protein>
    <recommendedName>
        <fullName evidence="1">Large ribosomal subunit protein eL18</fullName>
    </recommendedName>
    <alternativeName>
        <fullName>50S ribosomal protein L18e</fullName>
    </alternativeName>
    <alternativeName>
        <fullName>HL29e</fullName>
    </alternativeName>
</protein>
<reference key="1">
    <citation type="journal article" date="1995" name="Proc. Natl. Acad. Sci. U.S.A.">
        <title>Transcription in archaea: similarity to that in eucarya.</title>
        <authorList>
            <person name="Langer D."/>
            <person name="Hain J."/>
            <person name="Thuriaux P."/>
            <person name="Zillig W."/>
        </authorList>
    </citation>
    <scope>NUCLEOTIDE SEQUENCE [GENOMIC DNA]</scope>
    <source>
        <strain>ATCC 33909 / DSM 639 / JCM 8929 / NBRC 15157 / NCIMB 11770</strain>
    </source>
</reference>
<reference key="2">
    <citation type="journal article" date="2005" name="J. Bacteriol.">
        <title>The genome of Sulfolobus acidocaldarius, a model organism of the Crenarchaeota.</title>
        <authorList>
            <person name="Chen L."/>
            <person name="Bruegger K."/>
            <person name="Skovgaard M."/>
            <person name="Redder P."/>
            <person name="She Q."/>
            <person name="Torarinsson E."/>
            <person name="Greve B."/>
            <person name="Awayez M."/>
            <person name="Zibat A."/>
            <person name="Klenk H.-P."/>
            <person name="Garrett R.A."/>
        </authorList>
    </citation>
    <scope>NUCLEOTIDE SEQUENCE [LARGE SCALE GENOMIC DNA]</scope>
    <source>
        <strain>ATCC 33909 / DSM 639 / JCM 8929 / NBRC 15157 / NCIMB 11770</strain>
    </source>
</reference>
<gene>
    <name type="primary">rpl18e</name>
    <name type="ordered locus">Saci_0084</name>
</gene>
<dbReference type="EMBL" id="X80194">
    <property type="protein sequence ID" value="CAA56481.1"/>
    <property type="molecule type" value="Genomic_DNA"/>
</dbReference>
<dbReference type="EMBL" id="CP000077">
    <property type="protein sequence ID" value="AAY79511.1"/>
    <property type="status" value="ALT_INIT"/>
    <property type="molecule type" value="Genomic_DNA"/>
</dbReference>
<dbReference type="PIR" id="S47024">
    <property type="entry name" value="S47024"/>
</dbReference>
<dbReference type="RefSeq" id="WP_015385350.1">
    <property type="nucleotide sequence ID" value="NC_007181.1"/>
</dbReference>
<dbReference type="PDB" id="8HKU">
    <property type="method" value="EM"/>
    <property type="resolution" value="2.72 A"/>
    <property type="chains" value="L18E=6-117"/>
</dbReference>
<dbReference type="PDB" id="8HKV">
    <property type="method" value="EM"/>
    <property type="resolution" value="4.94 A"/>
    <property type="chains" value="L18E=6-117"/>
</dbReference>
<dbReference type="PDB" id="8HKY">
    <property type="method" value="EM"/>
    <property type="resolution" value="4.45 A"/>
    <property type="chains" value="L18E=6-117"/>
</dbReference>
<dbReference type="PDB" id="8HKZ">
    <property type="method" value="EM"/>
    <property type="resolution" value="4.78 A"/>
    <property type="chains" value="L18E=6-117"/>
</dbReference>
<dbReference type="PDB" id="8HL1">
    <property type="method" value="EM"/>
    <property type="resolution" value="3.93 A"/>
    <property type="chains" value="L18E=6-117"/>
</dbReference>
<dbReference type="PDB" id="8HL2">
    <property type="method" value="EM"/>
    <property type="resolution" value="4.10 A"/>
    <property type="chains" value="L18E=6-117"/>
</dbReference>
<dbReference type="PDB" id="8HL3">
    <property type="method" value="EM"/>
    <property type="resolution" value="4.80 A"/>
    <property type="chains" value="L18E=6-117"/>
</dbReference>
<dbReference type="PDB" id="8HL4">
    <property type="method" value="EM"/>
    <property type="resolution" value="4.62 A"/>
    <property type="chains" value="L18E=6-117"/>
</dbReference>
<dbReference type="PDB" id="8HL5">
    <property type="method" value="EM"/>
    <property type="resolution" value="5.72 A"/>
    <property type="chains" value="L18E=6-117"/>
</dbReference>
<dbReference type="PDBsum" id="8HKU"/>
<dbReference type="PDBsum" id="8HKV"/>
<dbReference type="PDBsum" id="8HKY"/>
<dbReference type="PDBsum" id="8HKZ"/>
<dbReference type="PDBsum" id="8HL1"/>
<dbReference type="PDBsum" id="8HL2"/>
<dbReference type="PDBsum" id="8HL3"/>
<dbReference type="PDBsum" id="8HL4"/>
<dbReference type="PDBsum" id="8HL5"/>
<dbReference type="EMDB" id="EMD-34860"/>
<dbReference type="EMDB" id="EMD-34861"/>
<dbReference type="EMDB" id="EMD-34863"/>
<dbReference type="EMDB" id="EMD-34864"/>
<dbReference type="EMDB" id="EMD-34866"/>
<dbReference type="EMDB" id="EMD-34867"/>
<dbReference type="EMDB" id="EMD-34868"/>
<dbReference type="EMDB" id="EMD-34869"/>
<dbReference type="EMDB" id="EMD-34870"/>
<dbReference type="SMR" id="P39474"/>
<dbReference type="STRING" id="330779.Saci_0084"/>
<dbReference type="GeneID" id="14550614"/>
<dbReference type="KEGG" id="sai:Saci_0084"/>
<dbReference type="PATRIC" id="fig|330779.12.peg.78"/>
<dbReference type="eggNOG" id="arCOG00780">
    <property type="taxonomic scope" value="Archaea"/>
</dbReference>
<dbReference type="HOGENOM" id="CLU_146465_0_0_2"/>
<dbReference type="Proteomes" id="UP000001018">
    <property type="component" value="Chromosome"/>
</dbReference>
<dbReference type="GO" id="GO:1990904">
    <property type="term" value="C:ribonucleoprotein complex"/>
    <property type="evidence" value="ECO:0007669"/>
    <property type="project" value="UniProtKB-KW"/>
</dbReference>
<dbReference type="GO" id="GO:0005840">
    <property type="term" value="C:ribosome"/>
    <property type="evidence" value="ECO:0007669"/>
    <property type="project" value="UniProtKB-KW"/>
</dbReference>
<dbReference type="GO" id="GO:0003735">
    <property type="term" value="F:structural constituent of ribosome"/>
    <property type="evidence" value="ECO:0007669"/>
    <property type="project" value="InterPro"/>
</dbReference>
<dbReference type="GO" id="GO:0006412">
    <property type="term" value="P:translation"/>
    <property type="evidence" value="ECO:0007669"/>
    <property type="project" value="UniProtKB-UniRule"/>
</dbReference>
<dbReference type="Gene3D" id="3.100.10.10">
    <property type="match status" value="1"/>
</dbReference>
<dbReference type="HAMAP" id="MF_00329">
    <property type="entry name" value="Ribosomal_eL18"/>
    <property type="match status" value="1"/>
</dbReference>
<dbReference type="InterPro" id="IPR021132">
    <property type="entry name" value="Ribosomal_eL18/eL18-A/B/_CS"/>
</dbReference>
<dbReference type="InterPro" id="IPR022947">
    <property type="entry name" value="Ribosomal_eL18_arc"/>
</dbReference>
<dbReference type="InterPro" id="IPR021131">
    <property type="entry name" value="Ribosomal_uL15/eL18"/>
</dbReference>
<dbReference type="InterPro" id="IPR036227">
    <property type="entry name" value="Ribosomal_uL15/eL18_sf"/>
</dbReference>
<dbReference type="InterPro" id="IPR001196">
    <property type="entry name" value="Ribosomal_uL15_CS"/>
</dbReference>
<dbReference type="NCBIfam" id="NF003079">
    <property type="entry name" value="PRK04005.1"/>
    <property type="match status" value="1"/>
</dbReference>
<dbReference type="Pfam" id="PF00828">
    <property type="entry name" value="Ribosomal_L27A"/>
    <property type="match status" value="1"/>
</dbReference>
<dbReference type="SUPFAM" id="SSF52080">
    <property type="entry name" value="Ribosomal proteins L15p and L18e"/>
    <property type="match status" value="1"/>
</dbReference>
<dbReference type="PROSITE" id="PS01106">
    <property type="entry name" value="RIBOSOMAL_L18E"/>
    <property type="match status" value="1"/>
</dbReference>
<keyword id="KW-0002">3D-structure</keyword>
<keyword id="KW-1185">Reference proteome</keyword>
<keyword id="KW-0687">Ribonucleoprotein</keyword>
<keyword id="KW-0689">Ribosomal protein</keyword>
<feature type="chain" id="PRO_0000132802" description="Large ribosomal subunit protein eL18">
    <location>
        <begin position="1"/>
        <end position="118"/>
    </location>
</feature>
<organism>
    <name type="scientific">Sulfolobus acidocaldarius (strain ATCC 33909 / DSM 639 / JCM 8929 / NBRC 15157 / NCIMB 11770)</name>
    <dbReference type="NCBI Taxonomy" id="330779"/>
    <lineage>
        <taxon>Archaea</taxon>
        <taxon>Thermoproteota</taxon>
        <taxon>Thermoprotei</taxon>
        <taxon>Sulfolobales</taxon>
        <taxon>Sulfolobaceae</taxon>
        <taxon>Sulfolobus</taxon>
    </lineage>
</organism>
<sequence length="118" mass="13369">MSRGSTNIMLRKLITSLKKQDKAIWVRVAEELEAPRRKRAYINIYKINRYSKANDIIVVPGKVLGVGNLDHPVTVVALSFSKPAKEKILRSGGKVMSLYKAIQELNDFKGKTVRLMKQ</sequence>
<accession>P39474</accession>
<accession>Q4JCG8</accession>
<comment type="similarity">
    <text evidence="1">Belongs to the eukaryotic ribosomal protein eL18 family.</text>
</comment>
<comment type="sequence caution" evidence="1">
    <conflict type="erroneous initiation">
        <sequence resource="EMBL-CDS" id="AAY79511"/>
    </conflict>
</comment>
<proteinExistence type="evidence at protein level"/>
<evidence type="ECO:0000305" key="1"/>